<proteinExistence type="inferred from homology"/>
<protein>
    <recommendedName>
        <fullName evidence="1">Triosephosphate isomerase</fullName>
        <shortName evidence="1">TIM</shortName>
        <shortName evidence="1">TPI</shortName>
        <ecNumber evidence="1">5.3.1.1</ecNumber>
    </recommendedName>
    <alternativeName>
        <fullName evidence="1">Triose-phosphate isomerase</fullName>
    </alternativeName>
</protein>
<reference key="1">
    <citation type="submission" date="2008-04" db="EMBL/GenBank/DDBJ databases">
        <title>Complete sequence of chromosome of Exiguobacterium sibiricum 255-15.</title>
        <authorList>
            <consortium name="US DOE Joint Genome Institute"/>
            <person name="Copeland A."/>
            <person name="Lucas S."/>
            <person name="Lapidus A."/>
            <person name="Glavina del Rio T."/>
            <person name="Dalin E."/>
            <person name="Tice H."/>
            <person name="Bruce D."/>
            <person name="Goodwin L."/>
            <person name="Pitluck S."/>
            <person name="Kiss H."/>
            <person name="Chertkov O."/>
            <person name="Monk C."/>
            <person name="Brettin T."/>
            <person name="Detter J.C."/>
            <person name="Han C."/>
            <person name="Kuske C.R."/>
            <person name="Schmutz J."/>
            <person name="Larimer F."/>
            <person name="Land M."/>
            <person name="Hauser L."/>
            <person name="Kyrpides N."/>
            <person name="Mikhailova N."/>
            <person name="Vishnivetskaya T."/>
            <person name="Rodrigues D.F."/>
            <person name="Gilichinsky D."/>
            <person name="Tiedje J."/>
            <person name="Richardson P."/>
        </authorList>
    </citation>
    <scope>NUCLEOTIDE SEQUENCE [LARGE SCALE GENOMIC DNA]</scope>
    <source>
        <strain>DSM 17290 / CCUG 55495 / CIP 109462 / JCM 13490 / 255-15</strain>
    </source>
</reference>
<sequence>MRKPIIAGNWKMNLTLKDAVAFAEEVKGTVPASSKVDAAVCAPSVFLAHLTEATAGTDLKIGAQNMYDQESGAFTGEISPVMLKELGVTYVVLGHSERREYFGETDAFINSKTKKAFEHGLVPIVCVGETLEEREGGKFESVIREQTTNSLKGLTVDQVKNLVVAYEPVWAIGTGKSATEQDAQDSCKFVRDVIAAEFGTEAAEAVRIQYGGSVKPDNIKEYMAQPDIDGALVGGASLETGSFLKLLEAI</sequence>
<comment type="function">
    <text evidence="1">Involved in the gluconeogenesis. Catalyzes stereospecifically the conversion of dihydroxyacetone phosphate (DHAP) to D-glyceraldehyde-3-phosphate (G3P).</text>
</comment>
<comment type="catalytic activity">
    <reaction evidence="1">
        <text>D-glyceraldehyde 3-phosphate = dihydroxyacetone phosphate</text>
        <dbReference type="Rhea" id="RHEA:18585"/>
        <dbReference type="ChEBI" id="CHEBI:57642"/>
        <dbReference type="ChEBI" id="CHEBI:59776"/>
        <dbReference type="EC" id="5.3.1.1"/>
    </reaction>
</comment>
<comment type="pathway">
    <text evidence="1">Carbohydrate biosynthesis; gluconeogenesis.</text>
</comment>
<comment type="pathway">
    <text evidence="1">Carbohydrate degradation; glycolysis; D-glyceraldehyde 3-phosphate from glycerone phosphate: step 1/1.</text>
</comment>
<comment type="subunit">
    <text evidence="1">Homodimer.</text>
</comment>
<comment type="subcellular location">
    <subcellularLocation>
        <location evidence="1">Cytoplasm</location>
    </subcellularLocation>
</comment>
<comment type="similarity">
    <text evidence="1">Belongs to the triosephosphate isomerase family.</text>
</comment>
<keyword id="KW-0963">Cytoplasm</keyword>
<keyword id="KW-0312">Gluconeogenesis</keyword>
<keyword id="KW-0324">Glycolysis</keyword>
<keyword id="KW-0413">Isomerase</keyword>
<keyword id="KW-1185">Reference proteome</keyword>
<name>TPIS_EXIS2</name>
<dbReference type="EC" id="5.3.1.1" evidence="1"/>
<dbReference type="EMBL" id="CP001022">
    <property type="protein sequence ID" value="ACB61845.1"/>
    <property type="molecule type" value="Genomic_DNA"/>
</dbReference>
<dbReference type="RefSeq" id="WP_012371261.1">
    <property type="nucleotide sequence ID" value="NC_010556.1"/>
</dbReference>
<dbReference type="SMR" id="B1YLE0"/>
<dbReference type="STRING" id="262543.Exig_2395"/>
<dbReference type="KEGG" id="esi:Exig_2395"/>
<dbReference type="eggNOG" id="COG0149">
    <property type="taxonomic scope" value="Bacteria"/>
</dbReference>
<dbReference type="HOGENOM" id="CLU_024251_2_3_9"/>
<dbReference type="OrthoDB" id="9809429at2"/>
<dbReference type="UniPathway" id="UPA00109">
    <property type="reaction ID" value="UER00189"/>
</dbReference>
<dbReference type="UniPathway" id="UPA00138"/>
<dbReference type="Proteomes" id="UP000001681">
    <property type="component" value="Chromosome"/>
</dbReference>
<dbReference type="GO" id="GO:0005829">
    <property type="term" value="C:cytosol"/>
    <property type="evidence" value="ECO:0007669"/>
    <property type="project" value="TreeGrafter"/>
</dbReference>
<dbReference type="GO" id="GO:0004807">
    <property type="term" value="F:triose-phosphate isomerase activity"/>
    <property type="evidence" value="ECO:0007669"/>
    <property type="project" value="UniProtKB-UniRule"/>
</dbReference>
<dbReference type="GO" id="GO:0006094">
    <property type="term" value="P:gluconeogenesis"/>
    <property type="evidence" value="ECO:0007669"/>
    <property type="project" value="UniProtKB-UniRule"/>
</dbReference>
<dbReference type="GO" id="GO:0046166">
    <property type="term" value="P:glyceraldehyde-3-phosphate biosynthetic process"/>
    <property type="evidence" value="ECO:0007669"/>
    <property type="project" value="TreeGrafter"/>
</dbReference>
<dbReference type="GO" id="GO:0019563">
    <property type="term" value="P:glycerol catabolic process"/>
    <property type="evidence" value="ECO:0007669"/>
    <property type="project" value="TreeGrafter"/>
</dbReference>
<dbReference type="GO" id="GO:0006096">
    <property type="term" value="P:glycolytic process"/>
    <property type="evidence" value="ECO:0007669"/>
    <property type="project" value="UniProtKB-UniRule"/>
</dbReference>
<dbReference type="CDD" id="cd00311">
    <property type="entry name" value="TIM"/>
    <property type="match status" value="1"/>
</dbReference>
<dbReference type="FunFam" id="3.20.20.70:FF:000016">
    <property type="entry name" value="Triosephosphate isomerase"/>
    <property type="match status" value="1"/>
</dbReference>
<dbReference type="Gene3D" id="3.20.20.70">
    <property type="entry name" value="Aldolase class I"/>
    <property type="match status" value="1"/>
</dbReference>
<dbReference type="HAMAP" id="MF_00147_B">
    <property type="entry name" value="TIM_B"/>
    <property type="match status" value="1"/>
</dbReference>
<dbReference type="InterPro" id="IPR013785">
    <property type="entry name" value="Aldolase_TIM"/>
</dbReference>
<dbReference type="InterPro" id="IPR035990">
    <property type="entry name" value="TIM_sf"/>
</dbReference>
<dbReference type="InterPro" id="IPR022896">
    <property type="entry name" value="TrioseP_Isoase_bac/euk"/>
</dbReference>
<dbReference type="InterPro" id="IPR000652">
    <property type="entry name" value="Triosephosphate_isomerase"/>
</dbReference>
<dbReference type="InterPro" id="IPR020861">
    <property type="entry name" value="Triosephosphate_isomerase_AS"/>
</dbReference>
<dbReference type="NCBIfam" id="TIGR00419">
    <property type="entry name" value="tim"/>
    <property type="match status" value="1"/>
</dbReference>
<dbReference type="PANTHER" id="PTHR21139">
    <property type="entry name" value="TRIOSEPHOSPHATE ISOMERASE"/>
    <property type="match status" value="1"/>
</dbReference>
<dbReference type="PANTHER" id="PTHR21139:SF42">
    <property type="entry name" value="TRIOSEPHOSPHATE ISOMERASE"/>
    <property type="match status" value="1"/>
</dbReference>
<dbReference type="Pfam" id="PF00121">
    <property type="entry name" value="TIM"/>
    <property type="match status" value="1"/>
</dbReference>
<dbReference type="SUPFAM" id="SSF51351">
    <property type="entry name" value="Triosephosphate isomerase (TIM)"/>
    <property type="match status" value="1"/>
</dbReference>
<dbReference type="PROSITE" id="PS00171">
    <property type="entry name" value="TIM_1"/>
    <property type="match status" value="1"/>
</dbReference>
<dbReference type="PROSITE" id="PS51440">
    <property type="entry name" value="TIM_2"/>
    <property type="match status" value="1"/>
</dbReference>
<evidence type="ECO:0000255" key="1">
    <source>
        <dbReference type="HAMAP-Rule" id="MF_00147"/>
    </source>
</evidence>
<accession>B1YLE0</accession>
<feature type="chain" id="PRO_1000096498" description="Triosephosphate isomerase">
    <location>
        <begin position="1"/>
        <end position="250"/>
    </location>
</feature>
<feature type="active site" description="Electrophile" evidence="1">
    <location>
        <position position="95"/>
    </location>
</feature>
<feature type="active site" description="Proton acceptor" evidence="1">
    <location>
        <position position="167"/>
    </location>
</feature>
<feature type="binding site" evidence="1">
    <location>
        <begin position="9"/>
        <end position="11"/>
    </location>
    <ligand>
        <name>substrate</name>
    </ligand>
</feature>
<feature type="binding site" evidence="1">
    <location>
        <position position="173"/>
    </location>
    <ligand>
        <name>substrate</name>
    </ligand>
</feature>
<feature type="binding site" evidence="1">
    <location>
        <position position="213"/>
    </location>
    <ligand>
        <name>substrate</name>
    </ligand>
</feature>
<feature type="binding site" evidence="1">
    <location>
        <begin position="234"/>
        <end position="235"/>
    </location>
    <ligand>
        <name>substrate</name>
    </ligand>
</feature>
<organism>
    <name type="scientific">Exiguobacterium sibiricum (strain DSM 17290 / CCUG 55495 / CIP 109462 / JCM 13490 / 255-15)</name>
    <dbReference type="NCBI Taxonomy" id="262543"/>
    <lineage>
        <taxon>Bacteria</taxon>
        <taxon>Bacillati</taxon>
        <taxon>Bacillota</taxon>
        <taxon>Bacilli</taxon>
        <taxon>Bacillales</taxon>
        <taxon>Bacillales Family XII. Incertae Sedis</taxon>
        <taxon>Exiguobacterium</taxon>
    </lineage>
</organism>
<gene>
    <name evidence="1" type="primary">tpiA</name>
    <name type="ordered locus">Exig_2395</name>
</gene>